<dbReference type="EMBL" id="CP001154">
    <property type="protein sequence ID" value="ACO73263.1"/>
    <property type="molecule type" value="Genomic_DNA"/>
</dbReference>
<dbReference type="RefSeq" id="WP_012695757.1">
    <property type="nucleotide sequence ID" value="NC_012559.1"/>
</dbReference>
<dbReference type="SMR" id="C1DAT2"/>
<dbReference type="STRING" id="557598.LHK_00268"/>
<dbReference type="GeneID" id="75109492"/>
<dbReference type="KEGG" id="lhk:LHK_00268"/>
<dbReference type="eggNOG" id="COG0097">
    <property type="taxonomic scope" value="Bacteria"/>
</dbReference>
<dbReference type="HOGENOM" id="CLU_065464_1_2_4"/>
<dbReference type="Proteomes" id="UP000002010">
    <property type="component" value="Chromosome"/>
</dbReference>
<dbReference type="GO" id="GO:0022625">
    <property type="term" value="C:cytosolic large ribosomal subunit"/>
    <property type="evidence" value="ECO:0007669"/>
    <property type="project" value="TreeGrafter"/>
</dbReference>
<dbReference type="GO" id="GO:0019843">
    <property type="term" value="F:rRNA binding"/>
    <property type="evidence" value="ECO:0007669"/>
    <property type="project" value="UniProtKB-UniRule"/>
</dbReference>
<dbReference type="GO" id="GO:0003735">
    <property type="term" value="F:structural constituent of ribosome"/>
    <property type="evidence" value="ECO:0007669"/>
    <property type="project" value="InterPro"/>
</dbReference>
<dbReference type="GO" id="GO:0002181">
    <property type="term" value="P:cytoplasmic translation"/>
    <property type="evidence" value="ECO:0007669"/>
    <property type="project" value="TreeGrafter"/>
</dbReference>
<dbReference type="FunFam" id="3.90.930.12:FF:000001">
    <property type="entry name" value="50S ribosomal protein L6"/>
    <property type="match status" value="1"/>
</dbReference>
<dbReference type="FunFam" id="3.90.930.12:FF:000002">
    <property type="entry name" value="50S ribosomal protein L6"/>
    <property type="match status" value="1"/>
</dbReference>
<dbReference type="Gene3D" id="3.90.930.12">
    <property type="entry name" value="Ribosomal protein L6, alpha-beta domain"/>
    <property type="match status" value="2"/>
</dbReference>
<dbReference type="HAMAP" id="MF_01365_B">
    <property type="entry name" value="Ribosomal_uL6_B"/>
    <property type="match status" value="1"/>
</dbReference>
<dbReference type="InterPro" id="IPR000702">
    <property type="entry name" value="Ribosomal_uL6-like"/>
</dbReference>
<dbReference type="InterPro" id="IPR036789">
    <property type="entry name" value="Ribosomal_uL6-like_a/b-dom_sf"/>
</dbReference>
<dbReference type="InterPro" id="IPR020040">
    <property type="entry name" value="Ribosomal_uL6_a/b-dom"/>
</dbReference>
<dbReference type="InterPro" id="IPR019906">
    <property type="entry name" value="Ribosomal_uL6_bac-type"/>
</dbReference>
<dbReference type="InterPro" id="IPR002358">
    <property type="entry name" value="Ribosomal_uL6_CS"/>
</dbReference>
<dbReference type="NCBIfam" id="TIGR03654">
    <property type="entry name" value="L6_bact"/>
    <property type="match status" value="1"/>
</dbReference>
<dbReference type="PANTHER" id="PTHR11655">
    <property type="entry name" value="60S/50S RIBOSOMAL PROTEIN L6/L9"/>
    <property type="match status" value="1"/>
</dbReference>
<dbReference type="PANTHER" id="PTHR11655:SF14">
    <property type="entry name" value="LARGE RIBOSOMAL SUBUNIT PROTEIN UL6M"/>
    <property type="match status" value="1"/>
</dbReference>
<dbReference type="Pfam" id="PF00347">
    <property type="entry name" value="Ribosomal_L6"/>
    <property type="match status" value="2"/>
</dbReference>
<dbReference type="PIRSF" id="PIRSF002162">
    <property type="entry name" value="Ribosomal_L6"/>
    <property type="match status" value="1"/>
</dbReference>
<dbReference type="PRINTS" id="PR00059">
    <property type="entry name" value="RIBOSOMALL6"/>
</dbReference>
<dbReference type="SUPFAM" id="SSF56053">
    <property type="entry name" value="Ribosomal protein L6"/>
    <property type="match status" value="2"/>
</dbReference>
<dbReference type="PROSITE" id="PS00525">
    <property type="entry name" value="RIBOSOMAL_L6_1"/>
    <property type="match status" value="1"/>
</dbReference>
<name>RL6_LARHH</name>
<evidence type="ECO:0000255" key="1">
    <source>
        <dbReference type="HAMAP-Rule" id="MF_01365"/>
    </source>
</evidence>
<evidence type="ECO:0000305" key="2"/>
<feature type="chain" id="PRO_1000166815" description="Large ribosomal subunit protein uL6">
    <location>
        <begin position="1"/>
        <end position="177"/>
    </location>
</feature>
<comment type="function">
    <text evidence="1">This protein binds to the 23S rRNA, and is important in its secondary structure. It is located near the subunit interface in the base of the L7/L12 stalk, and near the tRNA binding site of the peptidyltransferase center.</text>
</comment>
<comment type="subunit">
    <text evidence="1">Part of the 50S ribosomal subunit.</text>
</comment>
<comment type="similarity">
    <text evidence="1">Belongs to the universal ribosomal protein uL6 family.</text>
</comment>
<organism>
    <name type="scientific">Laribacter hongkongensis (strain HLHK9)</name>
    <dbReference type="NCBI Taxonomy" id="557598"/>
    <lineage>
        <taxon>Bacteria</taxon>
        <taxon>Pseudomonadati</taxon>
        <taxon>Pseudomonadota</taxon>
        <taxon>Betaproteobacteria</taxon>
        <taxon>Neisseriales</taxon>
        <taxon>Aquaspirillaceae</taxon>
        <taxon>Laribacter</taxon>
    </lineage>
</organism>
<protein>
    <recommendedName>
        <fullName evidence="1">Large ribosomal subunit protein uL6</fullName>
    </recommendedName>
    <alternativeName>
        <fullName evidence="2">50S ribosomal protein L6</fullName>
    </alternativeName>
</protein>
<proteinExistence type="inferred from homology"/>
<sequence length="177" mass="18879">MSRVAKNPVILPAGVEAKFTAAEIVVKGPLGQLAMPLNAGVEVRLEDNALKFAAKDESKASRSMSGTMRALVNNMVTGVSKGFERKLQLVGVGYRAQAQGAALNLTLGFSHPVVHPMPEGVAVETPSQTEIILKGVDKQKVGQVAAEIRAYRAPEPYKGKGVRYAGEQVVLKETKKK</sequence>
<reference key="1">
    <citation type="journal article" date="2009" name="PLoS Genet.">
        <title>The complete genome and proteome of Laribacter hongkongensis reveal potential mechanisms for adaptations to different temperatures and habitats.</title>
        <authorList>
            <person name="Woo P.C.Y."/>
            <person name="Lau S.K.P."/>
            <person name="Tse H."/>
            <person name="Teng J.L.L."/>
            <person name="Curreem S.O."/>
            <person name="Tsang A.K.L."/>
            <person name="Fan R.Y.Y."/>
            <person name="Wong G.K.M."/>
            <person name="Huang Y."/>
            <person name="Loman N.J."/>
            <person name="Snyder L.A.S."/>
            <person name="Cai J.J."/>
            <person name="Huang J.-D."/>
            <person name="Mak W."/>
            <person name="Pallen M.J."/>
            <person name="Lok S."/>
            <person name="Yuen K.-Y."/>
        </authorList>
    </citation>
    <scope>NUCLEOTIDE SEQUENCE [LARGE SCALE GENOMIC DNA]</scope>
    <source>
        <strain>HLHK9</strain>
    </source>
</reference>
<gene>
    <name evidence="1" type="primary">rplF</name>
    <name type="ordered locus">LHK_00268</name>
</gene>
<accession>C1DAT2</accession>
<keyword id="KW-1185">Reference proteome</keyword>
<keyword id="KW-0687">Ribonucleoprotein</keyword>
<keyword id="KW-0689">Ribosomal protein</keyword>
<keyword id="KW-0694">RNA-binding</keyword>
<keyword id="KW-0699">rRNA-binding</keyword>